<feature type="chain" id="PRO_1000018697" description="Phosphoribosylaminoimidazole-succinocarboxamide synthase">
    <location>
        <begin position="1"/>
        <end position="310"/>
    </location>
</feature>
<keyword id="KW-0067">ATP-binding</keyword>
<keyword id="KW-0436">Ligase</keyword>
<keyword id="KW-0547">Nucleotide-binding</keyword>
<keyword id="KW-0658">Purine biosynthesis</keyword>
<evidence type="ECO:0000255" key="1">
    <source>
        <dbReference type="HAMAP-Rule" id="MF_00137"/>
    </source>
</evidence>
<reference key="1">
    <citation type="journal article" date="2009" name="BMC Genomics">
        <title>Metabolic analysis of the soil microbe Dechloromonas aromatica str. RCB: indications of a surprisingly complex life-style and cryptic anaerobic pathways for aromatic degradation.</title>
        <authorList>
            <person name="Salinero K.K."/>
            <person name="Keller K."/>
            <person name="Feil W.S."/>
            <person name="Feil H."/>
            <person name="Trong S."/>
            <person name="Di Bartolo G."/>
            <person name="Lapidus A."/>
        </authorList>
    </citation>
    <scope>NUCLEOTIDE SEQUENCE [LARGE SCALE GENOMIC DNA]</scope>
    <source>
        <strain>RCB</strain>
    </source>
</reference>
<name>PUR7_DECAR</name>
<accession>Q479W2</accession>
<dbReference type="EC" id="6.3.2.6" evidence="1"/>
<dbReference type="EMBL" id="CP000089">
    <property type="protein sequence ID" value="AAZ48369.1"/>
    <property type="molecule type" value="Genomic_DNA"/>
</dbReference>
<dbReference type="SMR" id="Q479W2"/>
<dbReference type="STRING" id="159087.Daro_3640"/>
<dbReference type="KEGG" id="dar:Daro_3640"/>
<dbReference type="eggNOG" id="COG0152">
    <property type="taxonomic scope" value="Bacteria"/>
</dbReference>
<dbReference type="HOGENOM" id="CLU_045637_0_0_4"/>
<dbReference type="OrthoDB" id="9801549at2"/>
<dbReference type="UniPathway" id="UPA00074">
    <property type="reaction ID" value="UER00131"/>
</dbReference>
<dbReference type="GO" id="GO:0005737">
    <property type="term" value="C:cytoplasm"/>
    <property type="evidence" value="ECO:0007669"/>
    <property type="project" value="TreeGrafter"/>
</dbReference>
<dbReference type="GO" id="GO:0005524">
    <property type="term" value="F:ATP binding"/>
    <property type="evidence" value="ECO:0007669"/>
    <property type="project" value="UniProtKB-KW"/>
</dbReference>
<dbReference type="GO" id="GO:0004639">
    <property type="term" value="F:phosphoribosylaminoimidazolesuccinocarboxamide synthase activity"/>
    <property type="evidence" value="ECO:0007669"/>
    <property type="project" value="UniProtKB-UniRule"/>
</dbReference>
<dbReference type="GO" id="GO:0006189">
    <property type="term" value="P:'de novo' IMP biosynthetic process"/>
    <property type="evidence" value="ECO:0007669"/>
    <property type="project" value="UniProtKB-UniRule"/>
</dbReference>
<dbReference type="CDD" id="cd01414">
    <property type="entry name" value="SAICAR_synt_Sc"/>
    <property type="match status" value="1"/>
</dbReference>
<dbReference type="FunFam" id="3.30.470.20:FF:000015">
    <property type="entry name" value="Phosphoribosylaminoimidazole-succinocarboxamide synthase"/>
    <property type="match status" value="1"/>
</dbReference>
<dbReference type="Gene3D" id="3.30.470.20">
    <property type="entry name" value="ATP-grasp fold, B domain"/>
    <property type="match status" value="1"/>
</dbReference>
<dbReference type="Gene3D" id="3.30.200.20">
    <property type="entry name" value="Phosphorylase Kinase, domain 1"/>
    <property type="match status" value="1"/>
</dbReference>
<dbReference type="HAMAP" id="MF_00137">
    <property type="entry name" value="SAICAR_synth"/>
    <property type="match status" value="1"/>
</dbReference>
<dbReference type="InterPro" id="IPR028923">
    <property type="entry name" value="SAICAR_synt/ADE2_N"/>
</dbReference>
<dbReference type="InterPro" id="IPR001636">
    <property type="entry name" value="SAICAR_synth"/>
</dbReference>
<dbReference type="InterPro" id="IPR018236">
    <property type="entry name" value="SAICAR_synthetase_CS"/>
</dbReference>
<dbReference type="NCBIfam" id="NF010568">
    <property type="entry name" value="PRK13961.1"/>
    <property type="match status" value="1"/>
</dbReference>
<dbReference type="NCBIfam" id="TIGR00081">
    <property type="entry name" value="purC"/>
    <property type="match status" value="1"/>
</dbReference>
<dbReference type="PANTHER" id="PTHR43700">
    <property type="entry name" value="PHOSPHORIBOSYLAMINOIMIDAZOLE-SUCCINOCARBOXAMIDE SYNTHASE"/>
    <property type="match status" value="1"/>
</dbReference>
<dbReference type="PANTHER" id="PTHR43700:SF1">
    <property type="entry name" value="PHOSPHORIBOSYLAMINOIMIDAZOLE-SUCCINOCARBOXAMIDE SYNTHASE"/>
    <property type="match status" value="1"/>
</dbReference>
<dbReference type="Pfam" id="PF01259">
    <property type="entry name" value="SAICAR_synt"/>
    <property type="match status" value="1"/>
</dbReference>
<dbReference type="SUPFAM" id="SSF56104">
    <property type="entry name" value="SAICAR synthase-like"/>
    <property type="match status" value="1"/>
</dbReference>
<dbReference type="PROSITE" id="PS01057">
    <property type="entry name" value="SAICAR_SYNTHETASE_1"/>
    <property type="match status" value="1"/>
</dbReference>
<dbReference type="PROSITE" id="PS01058">
    <property type="entry name" value="SAICAR_SYNTHETASE_2"/>
    <property type="match status" value="1"/>
</dbReference>
<protein>
    <recommendedName>
        <fullName evidence="1">Phosphoribosylaminoimidazole-succinocarboxamide synthase</fullName>
        <ecNumber evidence="1">6.3.2.6</ecNumber>
    </recommendedName>
    <alternativeName>
        <fullName evidence="1">SAICAR synthetase</fullName>
    </alternativeName>
</protein>
<gene>
    <name evidence="1" type="primary">purC</name>
    <name type="ordered locus">Daro_3640</name>
</gene>
<proteinExistence type="inferred from homology"/>
<organism>
    <name type="scientific">Dechloromonas aromatica (strain RCB)</name>
    <dbReference type="NCBI Taxonomy" id="159087"/>
    <lineage>
        <taxon>Bacteria</taxon>
        <taxon>Pseudomonadati</taxon>
        <taxon>Pseudomonadota</taxon>
        <taxon>Betaproteobacteria</taxon>
        <taxon>Rhodocyclales</taxon>
        <taxon>Azonexaceae</taxon>
        <taxon>Dechloromonas</taxon>
    </lineage>
</organism>
<sequence length="310" mass="33433">MTAPLFESTITSLPLINKGKVRDIYAVDADKLLIVTTDRLSAFDVILPDPIPRKGEVLQAVANFWFDKLGHIVPNQLTGIDPETVVAENEREQVRGRAVVVKRLKPLPIEAVVRGYVIGSGWKDYQETGAICGIALPAGLKMAAKLPSPIFTPATKAAVGDHDENVSFATAQANCAADLAEALAGTGKNGAGLADEARIAAIRLYEEASAYARGRGIIIADTKFEFGIDAAGTLHLIDEALTPDSSRFWPADHYQEGSNPPSYDKQYVRDYLETLDWGKVAPGPKLPADVIARTSAKYIEAYEKLTGKTL</sequence>
<comment type="catalytic activity">
    <reaction evidence="1">
        <text>5-amino-1-(5-phospho-D-ribosyl)imidazole-4-carboxylate + L-aspartate + ATP = (2S)-2-[5-amino-1-(5-phospho-beta-D-ribosyl)imidazole-4-carboxamido]succinate + ADP + phosphate + 2 H(+)</text>
        <dbReference type="Rhea" id="RHEA:22628"/>
        <dbReference type="ChEBI" id="CHEBI:15378"/>
        <dbReference type="ChEBI" id="CHEBI:29991"/>
        <dbReference type="ChEBI" id="CHEBI:30616"/>
        <dbReference type="ChEBI" id="CHEBI:43474"/>
        <dbReference type="ChEBI" id="CHEBI:58443"/>
        <dbReference type="ChEBI" id="CHEBI:77657"/>
        <dbReference type="ChEBI" id="CHEBI:456216"/>
        <dbReference type="EC" id="6.3.2.6"/>
    </reaction>
</comment>
<comment type="pathway">
    <text evidence="1">Purine metabolism; IMP biosynthesis via de novo pathway; 5-amino-1-(5-phospho-D-ribosyl)imidazole-4-carboxamide from 5-amino-1-(5-phospho-D-ribosyl)imidazole-4-carboxylate: step 1/2.</text>
</comment>
<comment type="similarity">
    <text evidence="1">Belongs to the SAICAR synthetase family.</text>
</comment>